<protein>
    <recommendedName>
        <fullName evidence="1">Recombination protein RecR</fullName>
    </recommendedName>
</protein>
<evidence type="ECO:0000255" key="1">
    <source>
        <dbReference type="HAMAP-Rule" id="MF_00017"/>
    </source>
</evidence>
<sequence>MDINKLIAMFAKLPSFGPSSSRRIVLHLLRNKEEIMLPLASGIQDLAFQAKECPVCFNIDVKSPCSICSDTKRDHQLLCIVEELGDLWAFEKGKIYQGVYHVLGGTLSAIYGIGPDQLNLDSIVERIKKFNVQEVIIGIGNTMDGQVTTHYITQMVKELGIKVTRLACGIPMGGEIDYLDEGTLSAALSSRYIIS</sequence>
<name>RECR_EHRCR</name>
<feature type="chain" id="PRO_0000322888" description="Recombination protein RecR">
    <location>
        <begin position="1"/>
        <end position="195"/>
    </location>
</feature>
<feature type="domain" description="Toprim" evidence="1">
    <location>
        <begin position="76"/>
        <end position="171"/>
    </location>
</feature>
<feature type="zinc finger region" description="C4-type" evidence="1">
    <location>
        <begin position="53"/>
        <end position="68"/>
    </location>
</feature>
<reference key="1">
    <citation type="journal article" date="2006" name="PLoS Genet.">
        <title>Comparative genomics of emerging human ehrlichiosis agents.</title>
        <authorList>
            <person name="Dunning Hotopp J.C."/>
            <person name="Lin M."/>
            <person name="Madupu R."/>
            <person name="Crabtree J."/>
            <person name="Angiuoli S.V."/>
            <person name="Eisen J.A."/>
            <person name="Seshadri R."/>
            <person name="Ren Q."/>
            <person name="Wu M."/>
            <person name="Utterback T.R."/>
            <person name="Smith S."/>
            <person name="Lewis M."/>
            <person name="Khouri H."/>
            <person name="Zhang C."/>
            <person name="Niu H."/>
            <person name="Lin Q."/>
            <person name="Ohashi N."/>
            <person name="Zhi N."/>
            <person name="Nelson W.C."/>
            <person name="Brinkac L.M."/>
            <person name="Dodson R.J."/>
            <person name="Rosovitz M.J."/>
            <person name="Sundaram J.P."/>
            <person name="Daugherty S.C."/>
            <person name="Davidsen T."/>
            <person name="Durkin A.S."/>
            <person name="Gwinn M.L."/>
            <person name="Haft D.H."/>
            <person name="Selengut J.D."/>
            <person name="Sullivan S.A."/>
            <person name="Zafar N."/>
            <person name="Zhou L."/>
            <person name="Benahmed F."/>
            <person name="Forberger H."/>
            <person name="Halpin R."/>
            <person name="Mulligan S."/>
            <person name="Robinson J."/>
            <person name="White O."/>
            <person name="Rikihisa Y."/>
            <person name="Tettelin H."/>
        </authorList>
    </citation>
    <scope>NUCLEOTIDE SEQUENCE [LARGE SCALE GENOMIC DNA]</scope>
    <source>
        <strain>ATCC CRL-10679 / Arkansas</strain>
    </source>
</reference>
<organism>
    <name type="scientific">Ehrlichia chaffeensis (strain ATCC CRL-10679 / Arkansas)</name>
    <dbReference type="NCBI Taxonomy" id="205920"/>
    <lineage>
        <taxon>Bacteria</taxon>
        <taxon>Pseudomonadati</taxon>
        <taxon>Pseudomonadota</taxon>
        <taxon>Alphaproteobacteria</taxon>
        <taxon>Rickettsiales</taxon>
        <taxon>Anaplasmataceae</taxon>
        <taxon>Ehrlichia</taxon>
    </lineage>
</organism>
<comment type="function">
    <text evidence="1">May play a role in DNA repair. It seems to be involved in an RecBC-independent recombinational process of DNA repair. It may act with RecF and RecO.</text>
</comment>
<comment type="similarity">
    <text evidence="1">Belongs to the RecR family.</text>
</comment>
<dbReference type="EMBL" id="CP000236">
    <property type="protein sequence ID" value="ABD44991.1"/>
    <property type="molecule type" value="Genomic_DNA"/>
</dbReference>
<dbReference type="RefSeq" id="WP_011452846.1">
    <property type="nucleotide sequence ID" value="NC_007799.1"/>
</dbReference>
<dbReference type="SMR" id="Q2GFZ4"/>
<dbReference type="STRING" id="205920.ECH_0843"/>
<dbReference type="KEGG" id="ech:ECH_0843"/>
<dbReference type="eggNOG" id="COG0353">
    <property type="taxonomic scope" value="Bacteria"/>
</dbReference>
<dbReference type="HOGENOM" id="CLU_060739_1_1_5"/>
<dbReference type="OrthoDB" id="9802672at2"/>
<dbReference type="Proteomes" id="UP000008320">
    <property type="component" value="Chromosome"/>
</dbReference>
<dbReference type="GO" id="GO:0003677">
    <property type="term" value="F:DNA binding"/>
    <property type="evidence" value="ECO:0007669"/>
    <property type="project" value="UniProtKB-UniRule"/>
</dbReference>
<dbReference type="GO" id="GO:0008270">
    <property type="term" value="F:zinc ion binding"/>
    <property type="evidence" value="ECO:0007669"/>
    <property type="project" value="UniProtKB-KW"/>
</dbReference>
<dbReference type="GO" id="GO:0006310">
    <property type="term" value="P:DNA recombination"/>
    <property type="evidence" value="ECO:0007669"/>
    <property type="project" value="UniProtKB-UniRule"/>
</dbReference>
<dbReference type="GO" id="GO:0006281">
    <property type="term" value="P:DNA repair"/>
    <property type="evidence" value="ECO:0007669"/>
    <property type="project" value="UniProtKB-UniRule"/>
</dbReference>
<dbReference type="CDD" id="cd01025">
    <property type="entry name" value="TOPRIM_recR"/>
    <property type="match status" value="1"/>
</dbReference>
<dbReference type="Gene3D" id="3.40.1360.10">
    <property type="match status" value="1"/>
</dbReference>
<dbReference type="Gene3D" id="6.10.250.240">
    <property type="match status" value="1"/>
</dbReference>
<dbReference type="Gene3D" id="1.10.8.420">
    <property type="entry name" value="RecR Domain 1"/>
    <property type="match status" value="1"/>
</dbReference>
<dbReference type="HAMAP" id="MF_00017">
    <property type="entry name" value="RecR"/>
    <property type="match status" value="1"/>
</dbReference>
<dbReference type="InterPro" id="IPR000093">
    <property type="entry name" value="DNA_Rcmb_RecR"/>
</dbReference>
<dbReference type="InterPro" id="IPR023627">
    <property type="entry name" value="Rcmb_RecR"/>
</dbReference>
<dbReference type="InterPro" id="IPR015967">
    <property type="entry name" value="Rcmb_RecR_Znf"/>
</dbReference>
<dbReference type="InterPro" id="IPR006171">
    <property type="entry name" value="TOPRIM_dom"/>
</dbReference>
<dbReference type="InterPro" id="IPR034137">
    <property type="entry name" value="TOPRIM_RecR"/>
</dbReference>
<dbReference type="NCBIfam" id="TIGR00615">
    <property type="entry name" value="recR"/>
    <property type="match status" value="1"/>
</dbReference>
<dbReference type="PANTHER" id="PTHR30446">
    <property type="entry name" value="RECOMBINATION PROTEIN RECR"/>
    <property type="match status" value="1"/>
</dbReference>
<dbReference type="PANTHER" id="PTHR30446:SF0">
    <property type="entry name" value="RECOMBINATION PROTEIN RECR"/>
    <property type="match status" value="1"/>
</dbReference>
<dbReference type="Pfam" id="PF21175">
    <property type="entry name" value="RecR_C"/>
    <property type="match status" value="1"/>
</dbReference>
<dbReference type="Pfam" id="PF21176">
    <property type="entry name" value="RecR_HhH"/>
    <property type="match status" value="1"/>
</dbReference>
<dbReference type="Pfam" id="PF02132">
    <property type="entry name" value="RecR_ZnF"/>
    <property type="match status" value="1"/>
</dbReference>
<dbReference type="Pfam" id="PF13662">
    <property type="entry name" value="Toprim_4"/>
    <property type="match status" value="1"/>
</dbReference>
<dbReference type="SUPFAM" id="SSF111304">
    <property type="entry name" value="Recombination protein RecR"/>
    <property type="match status" value="1"/>
</dbReference>
<dbReference type="PROSITE" id="PS01300">
    <property type="entry name" value="RECR"/>
    <property type="match status" value="1"/>
</dbReference>
<dbReference type="PROSITE" id="PS50880">
    <property type="entry name" value="TOPRIM"/>
    <property type="match status" value="1"/>
</dbReference>
<accession>Q2GFZ4</accession>
<keyword id="KW-0227">DNA damage</keyword>
<keyword id="KW-0233">DNA recombination</keyword>
<keyword id="KW-0234">DNA repair</keyword>
<keyword id="KW-0479">Metal-binding</keyword>
<keyword id="KW-1185">Reference proteome</keyword>
<keyword id="KW-0862">Zinc</keyword>
<keyword id="KW-0863">Zinc-finger</keyword>
<gene>
    <name evidence="1" type="primary">recR</name>
    <name type="ordered locus">ECH_0843</name>
</gene>
<proteinExistence type="inferred from homology"/>